<protein>
    <recommendedName>
        <fullName evidence="24">Streptopain</fullName>
        <ecNumber evidence="7 11 14 16 18 19 20">3.4.22.10</ecNumber>
    </recommendedName>
    <alternativeName>
        <fullName evidence="26">Exotoxin type B</fullName>
    </alternativeName>
    <alternativeName>
        <fullName evidence="25">Group A streptococcal cysteine protease</fullName>
        <shortName>Streptococcal cysteine proteinase</shortName>
    </alternativeName>
    <alternativeName>
        <fullName evidence="27">SPE B</fullName>
    </alternativeName>
    <alternativeName>
        <fullName>Streptococcus peptidase A</fullName>
        <shortName>SPP</shortName>
    </alternativeName>
</protein>
<evidence type="ECO:0000250" key="1">
    <source>
        <dbReference type="UniProtKB" id="P0C0J0"/>
    </source>
</evidence>
<evidence type="ECO:0000269" key="2">
    <source>
    </source>
</evidence>
<evidence type="ECO:0000269" key="3">
    <source>
    </source>
</evidence>
<evidence type="ECO:0000269" key="4">
    <source>
    </source>
</evidence>
<evidence type="ECO:0000269" key="5">
    <source>
    </source>
</evidence>
<evidence type="ECO:0000269" key="6">
    <source>
    </source>
</evidence>
<evidence type="ECO:0000269" key="7">
    <source>
    </source>
</evidence>
<evidence type="ECO:0000269" key="8">
    <source>
    </source>
</evidence>
<evidence type="ECO:0000269" key="9">
    <source>
    </source>
</evidence>
<evidence type="ECO:0000269" key="10">
    <source>
    </source>
</evidence>
<evidence type="ECO:0000269" key="11">
    <source>
    </source>
</evidence>
<evidence type="ECO:0000269" key="12">
    <source>
    </source>
</evidence>
<evidence type="ECO:0000269" key="13">
    <source>
    </source>
</evidence>
<evidence type="ECO:0000269" key="14">
    <source>
    </source>
</evidence>
<evidence type="ECO:0000269" key="15">
    <source>
    </source>
</evidence>
<evidence type="ECO:0000269" key="16">
    <source>
    </source>
</evidence>
<evidence type="ECO:0000269" key="17">
    <source>
    </source>
</evidence>
<evidence type="ECO:0000269" key="18">
    <source>
    </source>
</evidence>
<evidence type="ECO:0000269" key="19">
    <source>
    </source>
</evidence>
<evidence type="ECO:0000269" key="20">
    <source>
    </source>
</evidence>
<evidence type="ECO:0000269" key="21">
    <source>
    </source>
</evidence>
<evidence type="ECO:0000269" key="22">
    <source>
    </source>
</evidence>
<evidence type="ECO:0000269" key="23">
    <source>
    </source>
</evidence>
<evidence type="ECO:0000303" key="24">
    <source>
    </source>
</evidence>
<evidence type="ECO:0000303" key="25">
    <source>
    </source>
</evidence>
<evidence type="ECO:0000303" key="26">
    <source>
    </source>
</evidence>
<evidence type="ECO:0000303" key="27">
    <source>
    </source>
</evidence>
<evidence type="ECO:0000305" key="28"/>
<evidence type="ECO:0000305" key="29">
    <source>
    </source>
</evidence>
<evidence type="ECO:0007829" key="30">
    <source>
        <dbReference type="PDB" id="2JTC"/>
    </source>
</evidence>
<accession>P0C0J1</accession>
<accession>P00788</accession>
<accession>P26296</accession>
<accession>P68883</accession>
<accession>Q48WC2</accession>
<accession>Q54960</accession>
<accession>Q54961</accession>
<accession>Q54962</accession>
<accession>Q54963</accession>
<accession>Q54964</accession>
<accession>Q54965</accession>
<accession>Q54966</accession>
<accession>Q54967</accession>
<accession>Q54968</accession>
<accession>Q57024</accession>
<accession>Q57082</accession>
<accession>Q57202</accession>
<accession>Q57211</accession>
<accession>Q57212</accession>
<accession>Q9S680</accession>
<feature type="signal peptide" evidence="1">
    <location>
        <begin position="1"/>
        <end position="27"/>
    </location>
</feature>
<feature type="propeptide" id="PRO_0000041939" evidence="29">
    <location>
        <begin position="28"/>
        <end position="145"/>
    </location>
</feature>
<feature type="chain" id="PRO_0000041940" description="Streptopain" evidence="29">
    <location>
        <begin position="146"/>
        <end position="398"/>
    </location>
</feature>
<feature type="region of interest" description="C-terminal active site loop" evidence="1">
    <location>
        <begin position="368"/>
        <end position="390"/>
    </location>
</feature>
<feature type="active site" description="Nucleophile" evidence="7">
    <location>
        <position position="192"/>
    </location>
</feature>
<feature type="active site" description="Proton acceptor" evidence="7">
    <location>
        <position position="340"/>
    </location>
</feature>
<feature type="binding site" evidence="1">
    <location>
        <position position="282"/>
    </location>
    <ligand>
        <name>a protein</name>
        <dbReference type="ChEBI" id="CHEBI:16541"/>
    </ligand>
</feature>
<feature type="binding site" evidence="1">
    <location>
        <position position="339"/>
    </location>
    <ligand>
        <name>a protein</name>
        <dbReference type="ChEBI" id="CHEBI:16541"/>
    </ligand>
</feature>
<feature type="site" description="Cleavage; by autolysis, trypsin and plasmin" evidence="7">
    <location>
        <begin position="53"/>
        <end position="54"/>
    </location>
</feature>
<feature type="site" description="Cleavage; by host plasmin" evidence="7">
    <location>
        <begin position="57"/>
        <end position="58"/>
    </location>
</feature>
<feature type="site" description="Cleavage; by autolysis" evidence="7">
    <location>
        <begin position="68"/>
        <end position="69"/>
    </location>
</feature>
<feature type="site" description="Cleavage; by autolysis" evidence="7">
    <location>
        <begin position="79"/>
        <end position="80"/>
    </location>
</feature>
<feature type="site" description="Cleavage; by autolysis" evidence="7">
    <location>
        <begin position="80"/>
        <end position="81"/>
    </location>
</feature>
<feature type="site" description="Cleavage; by autolysis" evidence="7">
    <location>
        <begin position="84"/>
        <end position="85"/>
    </location>
</feature>
<feature type="site" description="Cleavage; by autolysis" evidence="7">
    <location>
        <begin position="118"/>
        <end position="119"/>
    </location>
</feature>
<feature type="site" description="Cleavage; by autolysis, trypsin and plasmin" evidence="7">
    <location>
        <begin position="129"/>
        <end position="130"/>
    </location>
</feature>
<feature type="site" description="Cleavage; by host plasmin" evidence="7">
    <location>
        <begin position="132"/>
        <end position="133"/>
    </location>
</feature>
<feature type="site" description="Cleavage; by autolysis" evidence="7">
    <location>
        <begin position="139"/>
        <end position="140"/>
    </location>
</feature>
<feature type="site" description="Cleavage; by autolysis and host trypsin" evidence="7">
    <location>
        <begin position="145"/>
        <end position="146"/>
    </location>
</feature>
<feature type="site" description="Cleavage; by host plasmin" evidence="7">
    <location>
        <begin position="150"/>
        <end position="151"/>
    </location>
</feature>
<feature type="modified residue" description="Cysteine methyl disulfide; in zymogen form" evidence="1">
    <location>
        <position position="192"/>
    </location>
</feature>
<feature type="sequence variant" description="In strain: 789.">
    <original>V</original>
    <variation>I</variation>
    <location>
        <position position="8"/>
    </location>
</feature>
<feature type="sequence variant" description="In strain: A-20.">
    <original>V</original>
    <variation>L</variation>
    <location>
        <position position="193"/>
    </location>
</feature>
<feature type="sequence variant" description="In strain: 789.">
    <original>G</original>
    <variation>S</variation>
    <location>
        <position position="308"/>
    </location>
</feature>
<feature type="mutagenesis site" description="Reduced cysteine protease activity and ability to undergo autocatalytic cleavage." evidence="7">
    <original>Q</original>
    <variation>N</variation>
    <location>
        <position position="186"/>
    </location>
</feature>
<feature type="mutagenesis site" description="Abolished cysteine protease activity and ability to undergo autocatalytic cleavage. Abolished ability to cleave host GSDMA." evidence="7 20">
    <original>C</original>
    <variation>S</variation>
    <location>
        <position position="192"/>
    </location>
</feature>
<feature type="mutagenesis site" description="Reduces activity 130-fold." evidence="11">
    <original>V</original>
    <variation>A</variation>
    <location>
        <position position="334"/>
    </location>
</feature>
<feature type="mutagenesis site" description="Abolished cysteine protease activity and ability to undergo autocatalytic cleavage." evidence="7">
    <original>H</original>
    <variation>R</variation>
    <location>
        <position position="340"/>
    </location>
</feature>
<feature type="mutagenesis site" description="Strongly reduced cysteine protease activity and abolished ability to undergo autocatalytic cleavage." evidence="7">
    <original>N</original>
    <variation>D</variation>
    <location>
        <position position="356"/>
    </location>
</feature>
<feature type="mutagenesis site" description="Strongly reduced cysteine protease activity and ability to undergo autocatalytic cleavage." evidence="7 11">
    <original>W</original>
    <variation>A</variation>
    <location>
        <position position="357"/>
    </location>
</feature>
<feature type="mutagenesis site" description="Reduces activity 420-fold." evidence="11">
    <original>W</original>
    <variation>A</variation>
    <location>
        <position position="359"/>
    </location>
</feature>
<feature type="mutagenesis site" description="Reduces activity 14-fold." evidence="11">
    <original>G</original>
    <variation>D</variation>
    <location>
        <position position="384"/>
    </location>
</feature>
<feature type="helix" evidence="30">
    <location>
        <begin position="152"/>
        <end position="155"/>
    </location>
</feature>
<feature type="strand" evidence="30">
    <location>
        <begin position="162"/>
        <end position="164"/>
    </location>
</feature>
<feature type="helix" evidence="30">
    <location>
        <begin position="165"/>
        <end position="167"/>
    </location>
</feature>
<feature type="strand" evidence="30">
    <location>
        <begin position="168"/>
        <end position="170"/>
    </location>
</feature>
<feature type="helix" evidence="30">
    <location>
        <begin position="192"/>
        <end position="204"/>
    </location>
</feature>
<feature type="strand" evidence="30">
    <location>
        <begin position="214"/>
        <end position="217"/>
    </location>
</feature>
<feature type="strand" evidence="30">
    <location>
        <begin position="230"/>
        <end position="233"/>
    </location>
</feature>
<feature type="helix" evidence="30">
    <location>
        <begin position="235"/>
        <end position="237"/>
    </location>
</feature>
<feature type="turn" evidence="30">
    <location>
        <begin position="242"/>
        <end position="244"/>
    </location>
</feature>
<feature type="helix" evidence="30">
    <location>
        <begin position="255"/>
        <end position="271"/>
    </location>
</feature>
<feature type="strand" evidence="30">
    <location>
        <begin position="277"/>
        <end position="279"/>
    </location>
</feature>
<feature type="helix" evidence="30">
    <location>
        <begin position="285"/>
        <end position="294"/>
    </location>
</feature>
<feature type="strand" evidence="30">
    <location>
        <begin position="303"/>
        <end position="305"/>
    </location>
</feature>
<feature type="helix" evidence="30">
    <location>
        <begin position="307"/>
        <end position="309"/>
    </location>
</feature>
<feature type="helix" evidence="30">
    <location>
        <begin position="312"/>
        <end position="324"/>
    </location>
</feature>
<feature type="strand" evidence="30">
    <location>
        <begin position="329"/>
        <end position="334"/>
    </location>
</feature>
<feature type="strand" evidence="30">
    <location>
        <begin position="339"/>
        <end position="351"/>
    </location>
</feature>
<feature type="strand" evidence="30">
    <location>
        <begin position="353"/>
        <end position="356"/>
    </location>
</feature>
<feature type="strand" evidence="30">
    <location>
        <begin position="358"/>
        <end position="363"/>
    </location>
</feature>
<feature type="strand" evidence="30">
    <location>
        <begin position="388"/>
        <end position="394"/>
    </location>
</feature>
<comment type="function">
    <text evidence="2 3 4 5 6 7 8 9 10 11 12 13 14 15 16 17 18 19 20 21 22 23">Cysteine protease that acts as a key streptococcal virulence factor by cleaving host proteins involved in immune response (PubMed:10456871, PubMed:11406581, PubMed:11598100, PubMed:12438337, PubMed:12621045, PubMed:19237546, PubMed:23532847, PubMed:24331465, PubMed:35008838, PubMed:35110732, PubMed:35545676, PubMed:7516997). Triggers inflammation by mediating cleavage of host proteins, which can both promote host pathogenesis by triggering sterile inflammation and/or restrict streptococcal infection, depending on host immune statue and infection site (PubMed:35008838, PubMed:35110732, PubMed:35545676). Cleaves host gasdermin-A (GSDMA) in epithelial cells, promoting GSDMA activation and formation of gasdermin pores, triggering pyroptosis (PubMed:35110732, PubMed:35545676). Pyroptosis triggers the elimination of the infected skin cell, depriving the pathogen of its protective niche, while inducing an inflammatory response (PubMed:35110732, PubMed:35545676). This ultimately prevents bacterial penetration of the epithelial barrier and a subsequent systemic dissemination of the pathogen (PubMed:35110732, PubMed:35545676). Also mediates cleavage of the cytokine precursor interleukin-1 beta (IL1B) to its mature form, resulting in inflammation and septic shock (PubMed:28331908, PubMed:32719155). SpeB-mediated maturation of IL1B plays a dual role depending on infection site: while IL1B inflammatory response prevents bacterial growth during invasive skin infections, it promotes streptococcal infection of the nasopharynx by disrupting colonization resistance mediated by the microbiota (PubMed:28331908, PubMed:32719155). Inhibits host autophagy be catalyzing cleavage and inactivation of key autophagy factors, such as CALCOCO2, NBR1 and SQSTM1 (PubMed:24331465). Cleaves and inhibits a number of complement factors, such as C2, C3-beta chain of C3, C4, C5 or SERPING1, thereby promoting evasion of host immunity (PubMed:18160402, PubMed:23532847, PubMed:35008838). May also impair adaptive immunity by catalyzing cleavage and degradation of host immunoglobulins to promote immune system evasion; the relevance of this activity is however unsure in vivo (PubMed:11406581, PubMed:11598100, PubMed:12438337, PubMed:12496168, PubMed:23569114, PubMed:35008838). Catalyzes maturation and release of the peptide hormone bradykinin from the precursor Kininogen-1 (KNG1) to produce hypotension during septic shock (PubMed:8760820). Also involved in bacterial translocation across the host epithelial barrier by mediating cleavage and degradation of host epithelial junction proteins, such as CDH1 and OCLN (PubMed:23532847). Additionally, has been involved in degradation of fibronectin and vitronectin, two host extracellular matrix proteins involved in tissue integrity (PubMed:7516997). Also able to catalyze cleavage and degradation of streptococcal proteins, such as C5a peptidase, EndoS or SmeZ (PubMed:16980693, PubMed:18182097, PubMed:24799625, PubMed:7730368). Degradation of streptococcal proteins is however strictly regulated to preserve integrity of other virulence factors (PubMed:24799625).</text>
</comment>
<comment type="catalytic activity">
    <reaction evidence="7 11 14 16 19 20">
        <text>Preferential cleavage with hydrophobic residues at P2, P1 and P1'.</text>
        <dbReference type="EC" id="3.4.22.10"/>
    </reaction>
</comment>
<comment type="activity regulation">
    <text evidence="1 7 15">Synthesized as an inactive zymogen to protect the intracellular components of the bacteria from proteolytic activity during protein production (By similarity). Once secreted into the extracellular milieu, cleaved into the active protease: maturation can be mediated in cis by autocatalytic cleavage, or in trans by mature SpeB or host proteases (PubMed:12621045). Protease activity is strongly inhibited by zinc and copper, which prevent its maturation into an active protease: inhibition by metal ions may be required to prevent proteolysis of streptococcal proteins (PubMed:24799625).</text>
</comment>
<comment type="subunit">
    <text evidence="1">Monomer.</text>
</comment>
<comment type="subcellular location">
    <subcellularLocation>
        <location evidence="21">Secreted</location>
    </subcellularLocation>
    <subcellularLocation>
        <location evidence="9 21">Host extracellular space</location>
    </subcellularLocation>
    <subcellularLocation>
        <location evidence="20">Host cytoplasm</location>
    </subcellularLocation>
</comment>
<comment type="induction">
    <text evidence="20">Expression is regulated by the CovR-CovS two-component regulatory system.</text>
</comment>
<comment type="domain">
    <text evidence="1">The C-terminal active site loop is required for the recognition and recruitment of substrates and release of hydrolyzed products.</text>
</comment>
<comment type="PTM">
    <text evidence="7">The mature protease is derived from the precursor sequence by cleavage, either in cis via an autocatalytic mechanism, or in trans by mature SpeB or host proteases (trypsin, plasmin or subtilisin) (PubMed:12621045). Maturation can involve a number of protein cleavage intermediates (PubMed:12621045). Mature SpeB probably plays the most important role in protein maturation in physiological conditions (PubMed:12621045).</text>
</comment>
<comment type="PTM">
    <text evidence="1">Methylthiolation at Cys-192 of the inactive zymogen form is probably involved in the mechanism of secretion of the proteinase into the culture fluid.</text>
</comment>
<comment type="similarity">
    <text evidence="28">Belongs to the peptidase C10 family.</text>
</comment>
<name>SPEB_STRP1</name>
<gene>
    <name evidence="27" type="primary">speB</name>
    <name type="ordered locus">SPy_2039</name>
    <name type="ordered locus">M5005_Spy1735</name>
</gene>
<reference key="1">
    <citation type="journal article" date="1993" name="Microb. Pathog.">
        <title>A conserved Streptococcus pyogenes extracellular cysteine protease cleaves human fibronectin and degrades vitronectin.</title>
        <authorList>
            <person name="Kapur V."/>
            <person name="Topouzis S."/>
            <person name="Majesky M.W."/>
            <person name="Li L.L."/>
            <person name="Hamrick M.R."/>
            <person name="Hamill R.J."/>
            <person name="Patti J.M."/>
            <person name="Musser J.M."/>
        </authorList>
    </citation>
    <scope>NUCLEOTIDE SEQUENCE [GENOMIC DNA]</scope>
    <scope>FUNCTION</scope>
    <scope>SUBCELLULAR LOCATION</scope>
    <source>
        <strain>789 / Serotype M1</strain>
    </source>
</reference>
<reference key="2">
    <citation type="submission" date="1998-11" db="EMBL/GenBank/DDBJ databases">
        <authorList>
            <person name="Wu J.-J."/>
        </authorList>
    </citation>
    <scope>NUCLEOTIDE SEQUENCE [GENOMIC DNA]</scope>
    <source>
        <strain>A-20 / Serotype M1,T1</strain>
    </source>
</reference>
<reference key="3">
    <citation type="journal article" date="2001" name="Proc. Natl. Acad. Sci. U.S.A.">
        <title>Complete genome sequence of an M1 strain of Streptococcus pyogenes.</title>
        <authorList>
            <person name="Ferretti J.J."/>
            <person name="McShan W.M."/>
            <person name="Ajdic D.J."/>
            <person name="Savic D.J."/>
            <person name="Savic G."/>
            <person name="Lyon K."/>
            <person name="Primeaux C."/>
            <person name="Sezate S."/>
            <person name="Suvorov A.N."/>
            <person name="Kenton S."/>
            <person name="Lai H.S."/>
            <person name="Lin S.P."/>
            <person name="Qian Y."/>
            <person name="Jia H.G."/>
            <person name="Najar F.Z."/>
            <person name="Ren Q."/>
            <person name="Zhu H."/>
            <person name="Song L."/>
            <person name="White J."/>
            <person name="Yuan X."/>
            <person name="Clifton S.W."/>
            <person name="Roe B.A."/>
            <person name="McLaughlin R.E."/>
        </authorList>
    </citation>
    <scope>NUCLEOTIDE SEQUENCE [LARGE SCALE GENOMIC DNA]</scope>
    <source>
        <strain>ATCC 700294 / SF370 / Serotype M1</strain>
    </source>
</reference>
<reference key="4">
    <citation type="journal article" date="2005" name="J. Infect. Dis.">
        <title>Evolutionary origin and emergence of a highly successful clone of serotype M1 group A Streptococcus involved multiple horizontal gene transfer events.</title>
        <authorList>
            <person name="Sumby P."/>
            <person name="Porcella S.F."/>
            <person name="Madrigal A.G."/>
            <person name="Barbian K.D."/>
            <person name="Virtaneva K."/>
            <person name="Ricklefs S.M."/>
            <person name="Sturdevant D.E."/>
            <person name="Graham M.R."/>
            <person name="Vuopio-Varkila J."/>
            <person name="Hoe N.P."/>
            <person name="Musser J.M."/>
        </authorList>
    </citation>
    <scope>NUCLEOTIDE SEQUENCE [LARGE SCALE GENOMIC DNA]</scope>
    <source>
        <strain>ATCC BAA-947 / MGAS5005 / Serotype M1</strain>
    </source>
</reference>
<reference key="5">
    <citation type="journal article" date="2014" name="Infect. Immun.">
        <title>Metal-mediated modulation of streptococcal cysteine protease activity and its biological implications.</title>
        <authorList>
            <person name="Chella Krishnan K."/>
            <person name="Mukundan S."/>
            <person name="Landero Figueroa J.A."/>
            <person name="Caruso J.A."/>
            <person name="Kotb M."/>
        </authorList>
    </citation>
    <scope>PROTEIN SEQUENCE OF 115-129 AND 322-350</scope>
    <scope>FUNCTION</scope>
    <scope>ACTIVITY REGULATION</scope>
</reference>
<reference key="6">
    <citation type="journal article" date="1995" name="J. Biol. Chem.">
        <title>Streptococcal cysteine proteinase releases biologically active fragments of streptococcal surface proteins.</title>
        <authorList>
            <person name="Berge A."/>
            <person name="Bjoerck L."/>
        </authorList>
    </citation>
    <scope>FUNCTION</scope>
</reference>
<reference key="7">
    <citation type="journal article" date="1996" name="J. Exp. Med.">
        <title>Streptococcal cysteine proteinase releases kinins: a virulence mechanism.</title>
        <authorList>
            <person name="Herwald H."/>
            <person name="Collin M."/>
            <person name="Mueller-Esterl W."/>
            <person name="Bjoerck L."/>
        </authorList>
    </citation>
    <scope>FUNCTION</scope>
</reference>
<reference key="8">
    <citation type="journal article" date="1999" name="Infect. Immun.">
        <title>Group A Streptococcus induces apoptosis in human epithelial cells.</title>
        <authorList>
            <person name="Tsai P.-J."/>
            <person name="Lin Y.-S."/>
            <person name="Kuo C.-F."/>
            <person name="Lei H.-Y."/>
            <person name="Wu J.-J."/>
        </authorList>
    </citation>
    <scope>FUNCTION</scope>
    <source>
        <strain>A-20 / Serotype M1,T1</strain>
    </source>
</reference>
<reference key="9">
    <citation type="journal article" date="2001" name="EMBO J.">
        <title>EndoS, a novel secreted protein from Streptococcus pyogenes with endoglycosidase activity on human IgG.</title>
        <authorList>
            <person name="Collin M."/>
            <person name="Olsen A."/>
        </authorList>
    </citation>
    <scope>FUNCTION</scope>
</reference>
<reference key="10">
    <citation type="journal article" date="2001" name="Infect. Immun.">
        <title>Effect of SpeB and EndoS from Streptococcus pyogenes on human immunoglobulins.</title>
        <authorList>
            <person name="Collin M."/>
            <person name="Olsen A."/>
        </authorList>
    </citation>
    <scope>FUNCTION</scope>
</reference>
<reference key="11">
    <citation type="journal article" date="2002" name="Infect. Immun.">
        <title>EndoS and SpeB from Streptococcus pyogenes inhibit immunoglobulin-mediated opsonophagocytosis.</title>
        <authorList>
            <person name="Collin M."/>
            <person name="Svensson M.D."/>
            <person name="Sjoeholm A.G."/>
            <person name="Jensenius J.C."/>
            <person name="Sjoebring U."/>
            <person name="Olsen A."/>
        </authorList>
    </citation>
    <scope>FUNCTION</scope>
</reference>
<reference key="12">
    <citation type="journal article" date="2003" name="Infect. Immun.">
        <title>Cleavage of antigen-bound immunoglobulin G by SpeB contributes to streptococcal persistence in opsonizing blood.</title>
        <authorList>
            <person name="Eriksson A."/>
            <person name="Norgren M."/>
        </authorList>
    </citation>
    <scope>FUNCTION</scope>
</reference>
<reference key="13">
    <citation type="journal article" date="2003" name="J. Biol. Chem.">
        <title>Maturation processing and characterization of streptopain.</title>
        <authorList>
            <person name="Chen C.Y."/>
            <person name="Luo S.C."/>
            <person name="Kuo C.F."/>
            <person name="Lin Y.S."/>
            <person name="Wu J.J."/>
            <person name="Lin M.T."/>
            <person name="Liu C.C."/>
            <person name="Jeng W.Y."/>
            <person name="Chuang W.J."/>
        </authorList>
    </citation>
    <scope>FUNCTION</scope>
    <scope>CATALYTIC ACTIVITY</scope>
    <scope>ACTIVITY REGULATION</scope>
    <scope>PROTEOLYTIC CLEAVAGE</scope>
    <scope>ACTIVE SITES</scope>
    <scope>MUTAGENESIS OF GLN-186; CYS-192; HIS-340; ASN-356 AND TRP-357</scope>
    <source>
        <strain>A-20 / Serotype M1,T1</strain>
    </source>
</reference>
<reference key="14">
    <citation type="journal article" date="2006" name="J. Biol. Chem.">
        <title>Streptococcal mitogenic exotoxin, SmeZ, is the most susceptible M1T1 streptococcal superantigen to degradation by the streptococcal cysteine protease, SpeB.</title>
        <authorList>
            <person name="Nooh M.M."/>
            <person name="Aziz R.K."/>
            <person name="Kotb M."/>
            <person name="Eroshkin A."/>
            <person name="Chuang W.J."/>
            <person name="Proft T."/>
            <person name="Kansal R."/>
        </authorList>
    </citation>
    <scope>FUNCTION</scope>
</reference>
<reference key="15">
    <citation type="journal article" date="2008" name="BMC Microbiol.">
        <title>EndoS from Streptococcus pyogenes is hydrolyzed by the cysteine proteinase SpeB and requires glutamic acid 235 and tryptophans for IgG glycan-hydrolyzing activity.</title>
        <authorList>
            <person name="Allhorn M."/>
            <person name="Olsen A."/>
            <person name="Collin M."/>
        </authorList>
    </citation>
    <scope>FUNCTION</scope>
</reference>
<reference key="16">
    <citation type="journal article" date="2008" name="J. Biol. Chem.">
        <title>Group A streptococcal cysteine protease degrades C3 (C3b) and contributes to evasion of innate immunity.</title>
        <authorList>
            <person name="Terao Y."/>
            <person name="Mori Y."/>
            <person name="Yamaguchi M."/>
            <person name="Shimizu Y."/>
            <person name="Ooe K."/>
            <person name="Hamada S."/>
            <person name="Kawabata S."/>
        </authorList>
    </citation>
    <scope>FUNCTION</scope>
    <scope>SUBCELLULAR LOCATION</scope>
</reference>
<reference key="17">
    <citation type="journal article" date="2013" name="Infect. Immun.">
        <title>The streptococcal cysteine protease SpeB is not a natural immunoglobulin-cleaving enzyme.</title>
        <authorList>
            <person name="Persson H."/>
            <person name="Vindebro R."/>
            <person name="von Pawel-Rammingen U."/>
        </authorList>
    </citation>
    <scope>FUNCTION</scope>
</reference>
<reference key="18">
    <citation type="journal article" date="2013" name="Cell Host Microbe">
        <title>The globally disseminated M1T1 clone of group A Streptococcus evades autophagy for intracellular replication.</title>
        <authorList>
            <person name="Barnett T.C."/>
            <person name="Liebl D."/>
            <person name="Seymour L.M."/>
            <person name="Gillen C.M."/>
            <person name="Lim J.Y."/>
            <person name="Larock C.N."/>
            <person name="Davies M.R."/>
            <person name="Schulz B.L."/>
            <person name="Nizet V."/>
            <person name="Teasdale R.D."/>
            <person name="Walker M.J."/>
        </authorList>
    </citation>
    <scope>FUNCTION</scope>
    <scope>CATALYTIC ACTIVITY</scope>
</reference>
<reference key="19">
    <citation type="journal article" date="2013" name="J. Biol. Chem.">
        <title>Group A streptococcal cysteine protease cleaves epithelial junctions and contributes to bacterial translocation.</title>
        <authorList>
            <person name="Sumitomo T."/>
            <person name="Nakata M."/>
            <person name="Higashino M."/>
            <person name="Terao Y."/>
            <person name="Kawabata S."/>
        </authorList>
    </citation>
    <scope>FUNCTION</scope>
</reference>
<reference key="20">
    <citation type="journal article" date="2016" name="Sci. Immunol.">
        <title>IL-1beta is an innate immune sensor of microbial proteolysis.</title>
        <authorList>
            <person name="LaRock C.N."/>
            <person name="Todd J."/>
            <person name="LaRock D.L."/>
            <person name="Olson J."/>
            <person name="O'Donoghue A.J."/>
            <person name="Robertson A.A."/>
            <person name="Cooper M.A."/>
            <person name="Hoffman H.M."/>
            <person name="Nizet V."/>
        </authorList>
    </citation>
    <scope>FUNCTION</scope>
    <scope>CATALYTIC ACTIVITY</scope>
    <source>
        <strain>5448 / Serotype M1,T1</strain>
    </source>
</reference>
<reference key="21">
    <citation type="journal article" date="2020" name="Infect. Immun.">
        <title>Group A Streptococcus Infection of the Nasopharynx Requires Proinflammatory Signaling through the Interleukin-1 Receptor.</title>
        <authorList>
            <person name="LaRock D.L."/>
            <person name="Russell R."/>
            <person name="Johnson A.F."/>
            <person name="Wilde S."/>
            <person name="LaRock C.N."/>
        </authorList>
    </citation>
    <scope>FUNCTION</scope>
    <source>
        <strain>5448 / Serotype M1,T1</strain>
    </source>
</reference>
<reference key="22">
    <citation type="journal article" date="2021" name="Int. J. Mol. Sci.">
        <title>Proteolytic profiling of streptococcal pyrogenic exotoxin B (SpeB) by complementary HPLC-MS approaches.</title>
        <authorList>
            <person name="Bloechl C."/>
            <person name="Holzner C."/>
            <person name="Luciano M."/>
            <person name="Bauer R."/>
            <person name="Horejs-Hoeck J."/>
            <person name="Eckhard U."/>
            <person name="Brandstetter H."/>
            <person name="Huber C.G."/>
        </authorList>
    </citation>
    <scope>FUNCTION</scope>
    <scope>CATALYTIC ACTIVITY</scope>
</reference>
<reference key="23">
    <citation type="journal article" date="2022" name="Nature">
        <title>Streptococcal pyrogenic exotoxin B cleaves GSDMA and triggers pyroptosis.</title>
        <authorList>
            <person name="Deng W."/>
            <person name="Bai Y."/>
            <person name="Deng F."/>
            <person name="Pan Y."/>
            <person name="Mei S."/>
            <person name="Zheng Z."/>
            <person name="Min R."/>
            <person name="Wu Z."/>
            <person name="Li W."/>
            <person name="Miao R."/>
            <person name="Zhang Z."/>
            <person name="Kupper T.S."/>
            <person name="Lieberman J."/>
            <person name="Liu X."/>
        </authorList>
    </citation>
    <scope>FUNCTION</scope>
    <scope>CATALYTIC ACTIVITY</scope>
    <source>
        <strain>5448 / Serotype M1,T1</strain>
    </source>
</reference>
<reference key="24">
    <citation type="journal article" date="2022" name="Nature">
        <title>Group A Streptococcus induces GSDMA-dependent pyroptosis in keratinocytes.</title>
        <authorList>
            <person name="LaRock D.L."/>
            <person name="Johnson A.F."/>
            <person name="Wilde S."/>
            <person name="Sands J.S."/>
            <person name="Monteiro M.P."/>
            <person name="LaRock C.N."/>
        </authorList>
    </citation>
    <scope>FUNCTION</scope>
    <scope>CATALYTIC ACTIVITY</scope>
    <scope>SUBCELLULAR LOCATION</scope>
    <scope>INDUCTION</scope>
    <scope>MUTAGENESIS OF CYS-192</scope>
    <source>
        <strain>5448 / Serotype M1,T1</strain>
    </source>
</reference>
<reference key="25">
    <citation type="journal article" date="2009" name="J. Biol. Chem.">
        <title>Solution structure and backbone dynamics of streptopain: insight into diverse substrate specificity.</title>
        <authorList>
            <person name="Wang C.C."/>
            <person name="Houng H.C."/>
            <person name="Chen C.L."/>
            <person name="Wang P.J."/>
            <person name="Kuo C.F."/>
            <person name="Lin Y.S."/>
            <person name="Wu J.J."/>
            <person name="Lin M.T."/>
            <person name="Liu C.C."/>
            <person name="Huang W."/>
            <person name="Chuang W.J."/>
        </authorList>
    </citation>
    <scope>STRUCTURE BY NMR OF 146-398</scope>
    <scope>MUTAGENESIS OF VAL-334; TRP-357; TRP-359 AND GLY-384</scope>
    <scope>FUNCTION</scope>
    <scope>CATALYTIC ACTIVITY</scope>
</reference>
<organism>
    <name type="scientific">Streptococcus pyogenes serotype M1</name>
    <dbReference type="NCBI Taxonomy" id="301447"/>
    <lineage>
        <taxon>Bacteria</taxon>
        <taxon>Bacillati</taxon>
        <taxon>Bacillota</taxon>
        <taxon>Bacilli</taxon>
        <taxon>Lactobacillales</taxon>
        <taxon>Streptococcaceae</taxon>
        <taxon>Streptococcus</taxon>
    </lineage>
</organism>
<dbReference type="EC" id="3.4.22.10" evidence="7 11 14 16 18 19 20"/>
<dbReference type="EMBL" id="L26158">
    <property type="protein sequence ID" value="AAA26987.1"/>
    <property type="molecule type" value="Genomic_DNA"/>
</dbReference>
<dbReference type="EMBL" id="AF104940">
    <property type="protein sequence ID" value="AAD17930.1"/>
    <property type="molecule type" value="Genomic_DNA"/>
</dbReference>
<dbReference type="EMBL" id="AE004092">
    <property type="protein sequence ID" value="AAK34706.1"/>
    <property type="molecule type" value="Genomic_DNA"/>
</dbReference>
<dbReference type="EMBL" id="CP000017">
    <property type="protein sequence ID" value="AAZ52353.1"/>
    <property type="molecule type" value="Genomic_DNA"/>
</dbReference>
<dbReference type="RefSeq" id="NP_269985.1">
    <property type="nucleotide sequence ID" value="NC_002737.2"/>
</dbReference>
<dbReference type="PDB" id="2JTC">
    <property type="method" value="NMR"/>
    <property type="chains" value="A=146-398"/>
</dbReference>
<dbReference type="PDBsum" id="2JTC"/>
<dbReference type="BMRB" id="P0C0J1"/>
<dbReference type="SMR" id="P0C0J1"/>
<dbReference type="MEROPS" id="C10.001"/>
<dbReference type="PaxDb" id="1314-HKU360_01851"/>
<dbReference type="KEGG" id="spy:SPy_2039"/>
<dbReference type="KEGG" id="spz:M5005_Spy1735"/>
<dbReference type="PATRIC" id="fig|160490.10.peg.1768"/>
<dbReference type="HOGENOM" id="CLU_716727_0_0_9"/>
<dbReference type="OMA" id="WESQIDK"/>
<dbReference type="EvolutionaryTrace" id="P0C0J1"/>
<dbReference type="Proteomes" id="UP000000750">
    <property type="component" value="Chromosome"/>
</dbReference>
<dbReference type="GO" id="GO:0005829">
    <property type="term" value="C:cytosol"/>
    <property type="evidence" value="ECO:0000314"/>
    <property type="project" value="UniProt"/>
</dbReference>
<dbReference type="GO" id="GO:0005576">
    <property type="term" value="C:extracellular region"/>
    <property type="evidence" value="ECO:0007669"/>
    <property type="project" value="UniProtKB-SubCell"/>
</dbReference>
<dbReference type="GO" id="GO:0044164">
    <property type="term" value="C:host cell cytosol"/>
    <property type="evidence" value="ECO:0000314"/>
    <property type="project" value="UniProtKB"/>
</dbReference>
<dbReference type="GO" id="GO:0043655">
    <property type="term" value="C:host extracellular space"/>
    <property type="evidence" value="ECO:0000314"/>
    <property type="project" value="UniProtKB"/>
</dbReference>
<dbReference type="GO" id="GO:0004197">
    <property type="term" value="F:cysteine-type endopeptidase activity"/>
    <property type="evidence" value="ECO:0000314"/>
    <property type="project" value="UniProtKB"/>
</dbReference>
<dbReference type="GO" id="GO:0090729">
    <property type="term" value="F:toxin activity"/>
    <property type="evidence" value="ECO:0007669"/>
    <property type="project" value="UniProtKB-KW"/>
</dbReference>
<dbReference type="GO" id="GO:0051604">
    <property type="term" value="P:protein maturation"/>
    <property type="evidence" value="ECO:0000314"/>
    <property type="project" value="UniProt"/>
</dbReference>
<dbReference type="GO" id="GO:0006508">
    <property type="term" value="P:proteolysis"/>
    <property type="evidence" value="ECO:0007669"/>
    <property type="project" value="UniProtKB-KW"/>
</dbReference>
<dbReference type="GO" id="GO:0034050">
    <property type="term" value="P:symbiont-induced defense-related programmed cell death"/>
    <property type="evidence" value="ECO:0000314"/>
    <property type="project" value="UniProtKB"/>
</dbReference>
<dbReference type="GO" id="GO:0042783">
    <property type="term" value="P:symbiont-mediated evasion of host immune response"/>
    <property type="evidence" value="ECO:0000314"/>
    <property type="project" value="UniProtKB"/>
</dbReference>
<dbReference type="GO" id="GO:0140321">
    <property type="term" value="P:symbiont-mediated suppression of host autophagy"/>
    <property type="evidence" value="ECO:0000314"/>
    <property type="project" value="UniProtKB"/>
</dbReference>
<dbReference type="Gene3D" id="3.90.70.50">
    <property type="entry name" value="Peptidase C10, streptopain"/>
    <property type="match status" value="1"/>
</dbReference>
<dbReference type="InterPro" id="IPR038765">
    <property type="entry name" value="Papain-like_cys_pep_sf"/>
</dbReference>
<dbReference type="InterPro" id="IPR000200">
    <property type="entry name" value="Peptidase_C10"/>
</dbReference>
<dbReference type="InterPro" id="IPR025896">
    <property type="entry name" value="Spi_Prtas-inh"/>
</dbReference>
<dbReference type="InterPro" id="IPR044934">
    <property type="entry name" value="Streptopain_sf"/>
</dbReference>
<dbReference type="Pfam" id="PF13734">
    <property type="entry name" value="Inhibitor_I69"/>
    <property type="match status" value="1"/>
</dbReference>
<dbReference type="Pfam" id="PF01640">
    <property type="entry name" value="Peptidase_C10"/>
    <property type="match status" value="1"/>
</dbReference>
<dbReference type="PRINTS" id="PR00797">
    <property type="entry name" value="STREPTOPAIN"/>
</dbReference>
<dbReference type="SUPFAM" id="SSF54001">
    <property type="entry name" value="Cysteine proteinases"/>
    <property type="match status" value="1"/>
</dbReference>
<proteinExistence type="evidence at protein level"/>
<sequence>MNKKKLGVRLLSLLALGGFVLANPVFADQNFARNEKEAKDSAITFIQKSAAIKAGARSAEDIKLDKVNLGGELSGSNMYVYNISTGGFVIVSGDKRSPEILGYSTSGSFDANGKENIASFMESYVEQIKENKKLDTTYAGTAEIKQPVVKSLLDSKGIHYNQGNPYNLLTPVIEKVKPGEQSFVGQHAATGCVATATAQIMKYHNYPNKGLKDYTYTLSSNNPYFNHPKNLFAAISTRQYNWNNILPTYSGRESNVQKMAISELMADVGISVDMDYGPSSGSAGSSRVQRALKENFGYNQSVHQINRGDFSKQDWEAQIDKELSQNQPVYYQGVGKVGGHAFVIDGADGRNFYHVNWGWGGVSDGFFRLDALNPSALGTGGGAGGFNGYQSAVVGIKP</sequence>
<keyword id="KW-0002">3D-structure</keyword>
<keyword id="KW-0068">Autocatalytic cleavage</keyword>
<keyword id="KW-0903">Direct protein sequencing</keyword>
<keyword id="KW-1035">Host cytoplasm</keyword>
<keyword id="KW-0378">Hydrolase</keyword>
<keyword id="KW-0488">Methylation</keyword>
<keyword id="KW-0645">Protease</keyword>
<keyword id="KW-1185">Reference proteome</keyword>
<keyword id="KW-0964">Secreted</keyword>
<keyword id="KW-0732">Signal</keyword>
<keyword id="KW-0788">Thiol protease</keyword>
<keyword id="KW-0800">Toxin</keyword>
<keyword id="KW-0843">Virulence</keyword>
<keyword id="KW-0865">Zymogen</keyword>